<evidence type="ECO:0000250" key="1"/>
<evidence type="ECO:0000250" key="2">
    <source>
        <dbReference type="UniProtKB" id="Q3L8U1"/>
    </source>
</evidence>
<evidence type="ECO:0000255" key="3">
    <source>
        <dbReference type="PROSITE-ProRule" id="PRU00053"/>
    </source>
</evidence>
<evidence type="ECO:0000255" key="4">
    <source>
        <dbReference type="PROSITE-ProRule" id="PRU00541"/>
    </source>
</evidence>
<evidence type="ECO:0000255" key="5">
    <source>
        <dbReference type="PROSITE-ProRule" id="PRU00542"/>
    </source>
</evidence>
<evidence type="ECO:0000256" key="6">
    <source>
        <dbReference type="SAM" id="MobiDB-lite"/>
    </source>
</evidence>
<evidence type="ECO:0000269" key="7">
    <source>
    </source>
</evidence>
<evidence type="ECO:0000303" key="8">
    <source>
    </source>
</evidence>
<evidence type="ECO:0000303" key="9">
    <source>
    </source>
</evidence>
<evidence type="ECO:0000305" key="10"/>
<keyword id="KW-0007">Acetylation</keyword>
<keyword id="KW-0025">Alternative splicing</keyword>
<keyword id="KW-0067">ATP-binding</keyword>
<keyword id="KW-0156">Chromatin regulator</keyword>
<keyword id="KW-0963">Cytoplasm</keyword>
<keyword id="KW-0238">DNA-binding</keyword>
<keyword id="KW-0378">Hydrolase</keyword>
<keyword id="KW-1017">Isopeptide bond</keyword>
<keyword id="KW-0547">Nucleotide-binding</keyword>
<keyword id="KW-0539">Nucleus</keyword>
<keyword id="KW-0597">Phosphoprotein</keyword>
<keyword id="KW-1185">Reference proteome</keyword>
<keyword id="KW-0677">Repeat</keyword>
<keyword id="KW-0804">Transcription</keyword>
<keyword id="KW-0805">Transcription regulation</keyword>
<keyword id="KW-0832">Ubl conjugation</keyword>
<accession>Q8BYH8</accession>
<accession>Q7TMV5</accession>
<accession>Q8BJG8</accession>
<accession>Q8BZJ2</accession>
<accession>Q8CHG8</accession>
<reference key="1">
    <citation type="journal article" date="2006" name="Biochem. Biophys. Res. Commun.">
        <title>PRIC320, a transcription coactivator, isolated from peroxisome proliferator-binding protein complex.</title>
        <authorList>
            <person name="Surapureddi S."/>
            <person name="Viswakarma N."/>
            <person name="Yu S."/>
            <person name="Guo D."/>
            <person name="Rao M.S."/>
            <person name="Reddy J.K."/>
        </authorList>
    </citation>
    <scope>NUCLEOTIDE SEQUENCE [MRNA] (ISOFORM 2)</scope>
</reference>
<reference key="2">
    <citation type="journal article" date="2005" name="Science">
        <title>The transcriptional landscape of the mammalian genome.</title>
        <authorList>
            <person name="Carninci P."/>
            <person name="Kasukawa T."/>
            <person name="Katayama S."/>
            <person name="Gough J."/>
            <person name="Frith M.C."/>
            <person name="Maeda N."/>
            <person name="Oyama R."/>
            <person name="Ravasi T."/>
            <person name="Lenhard B."/>
            <person name="Wells C."/>
            <person name="Kodzius R."/>
            <person name="Shimokawa K."/>
            <person name="Bajic V.B."/>
            <person name="Brenner S.E."/>
            <person name="Batalov S."/>
            <person name="Forrest A.R."/>
            <person name="Zavolan M."/>
            <person name="Davis M.J."/>
            <person name="Wilming L.G."/>
            <person name="Aidinis V."/>
            <person name="Allen J.E."/>
            <person name="Ambesi-Impiombato A."/>
            <person name="Apweiler R."/>
            <person name="Aturaliya R.N."/>
            <person name="Bailey T.L."/>
            <person name="Bansal M."/>
            <person name="Baxter L."/>
            <person name="Beisel K.W."/>
            <person name="Bersano T."/>
            <person name="Bono H."/>
            <person name="Chalk A.M."/>
            <person name="Chiu K.P."/>
            <person name="Choudhary V."/>
            <person name="Christoffels A."/>
            <person name="Clutterbuck D.R."/>
            <person name="Crowe M.L."/>
            <person name="Dalla E."/>
            <person name="Dalrymple B.P."/>
            <person name="de Bono B."/>
            <person name="Della Gatta G."/>
            <person name="di Bernardo D."/>
            <person name="Down T."/>
            <person name="Engstrom P."/>
            <person name="Fagiolini M."/>
            <person name="Faulkner G."/>
            <person name="Fletcher C.F."/>
            <person name="Fukushima T."/>
            <person name="Furuno M."/>
            <person name="Futaki S."/>
            <person name="Gariboldi M."/>
            <person name="Georgii-Hemming P."/>
            <person name="Gingeras T.R."/>
            <person name="Gojobori T."/>
            <person name="Green R.E."/>
            <person name="Gustincich S."/>
            <person name="Harbers M."/>
            <person name="Hayashi Y."/>
            <person name="Hensch T.K."/>
            <person name="Hirokawa N."/>
            <person name="Hill D."/>
            <person name="Huminiecki L."/>
            <person name="Iacono M."/>
            <person name="Ikeo K."/>
            <person name="Iwama A."/>
            <person name="Ishikawa T."/>
            <person name="Jakt M."/>
            <person name="Kanapin A."/>
            <person name="Katoh M."/>
            <person name="Kawasawa Y."/>
            <person name="Kelso J."/>
            <person name="Kitamura H."/>
            <person name="Kitano H."/>
            <person name="Kollias G."/>
            <person name="Krishnan S.P."/>
            <person name="Kruger A."/>
            <person name="Kummerfeld S.K."/>
            <person name="Kurochkin I.V."/>
            <person name="Lareau L.F."/>
            <person name="Lazarevic D."/>
            <person name="Lipovich L."/>
            <person name="Liu J."/>
            <person name="Liuni S."/>
            <person name="McWilliam S."/>
            <person name="Madan Babu M."/>
            <person name="Madera M."/>
            <person name="Marchionni L."/>
            <person name="Matsuda H."/>
            <person name="Matsuzawa S."/>
            <person name="Miki H."/>
            <person name="Mignone F."/>
            <person name="Miyake S."/>
            <person name="Morris K."/>
            <person name="Mottagui-Tabar S."/>
            <person name="Mulder N."/>
            <person name="Nakano N."/>
            <person name="Nakauchi H."/>
            <person name="Ng P."/>
            <person name="Nilsson R."/>
            <person name="Nishiguchi S."/>
            <person name="Nishikawa S."/>
            <person name="Nori F."/>
            <person name="Ohara O."/>
            <person name="Okazaki Y."/>
            <person name="Orlando V."/>
            <person name="Pang K.C."/>
            <person name="Pavan W.J."/>
            <person name="Pavesi G."/>
            <person name="Pesole G."/>
            <person name="Petrovsky N."/>
            <person name="Piazza S."/>
            <person name="Reed J."/>
            <person name="Reid J.F."/>
            <person name="Ring B.Z."/>
            <person name="Ringwald M."/>
            <person name="Rost B."/>
            <person name="Ruan Y."/>
            <person name="Salzberg S.L."/>
            <person name="Sandelin A."/>
            <person name="Schneider C."/>
            <person name="Schoenbach C."/>
            <person name="Sekiguchi K."/>
            <person name="Semple C.A."/>
            <person name="Seno S."/>
            <person name="Sessa L."/>
            <person name="Sheng Y."/>
            <person name="Shibata Y."/>
            <person name="Shimada H."/>
            <person name="Shimada K."/>
            <person name="Silva D."/>
            <person name="Sinclair B."/>
            <person name="Sperling S."/>
            <person name="Stupka E."/>
            <person name="Sugiura K."/>
            <person name="Sultana R."/>
            <person name="Takenaka Y."/>
            <person name="Taki K."/>
            <person name="Tammoja K."/>
            <person name="Tan S.L."/>
            <person name="Tang S."/>
            <person name="Taylor M.S."/>
            <person name="Tegner J."/>
            <person name="Teichmann S.A."/>
            <person name="Ueda H.R."/>
            <person name="van Nimwegen E."/>
            <person name="Verardo R."/>
            <person name="Wei C.L."/>
            <person name="Yagi K."/>
            <person name="Yamanishi H."/>
            <person name="Zabarovsky E."/>
            <person name="Zhu S."/>
            <person name="Zimmer A."/>
            <person name="Hide W."/>
            <person name="Bult C."/>
            <person name="Grimmond S.M."/>
            <person name="Teasdale R.D."/>
            <person name="Liu E.T."/>
            <person name="Brusic V."/>
            <person name="Quackenbush J."/>
            <person name="Wahlestedt C."/>
            <person name="Mattick J.S."/>
            <person name="Hume D.A."/>
            <person name="Kai C."/>
            <person name="Sasaki D."/>
            <person name="Tomaru Y."/>
            <person name="Fukuda S."/>
            <person name="Kanamori-Katayama M."/>
            <person name="Suzuki M."/>
            <person name="Aoki J."/>
            <person name="Arakawa T."/>
            <person name="Iida J."/>
            <person name="Imamura K."/>
            <person name="Itoh M."/>
            <person name="Kato T."/>
            <person name="Kawaji H."/>
            <person name="Kawagashira N."/>
            <person name="Kawashima T."/>
            <person name="Kojima M."/>
            <person name="Kondo S."/>
            <person name="Konno H."/>
            <person name="Nakano K."/>
            <person name="Ninomiya N."/>
            <person name="Nishio T."/>
            <person name="Okada M."/>
            <person name="Plessy C."/>
            <person name="Shibata K."/>
            <person name="Shiraki T."/>
            <person name="Suzuki S."/>
            <person name="Tagami M."/>
            <person name="Waki K."/>
            <person name="Watahiki A."/>
            <person name="Okamura-Oho Y."/>
            <person name="Suzuki H."/>
            <person name="Kawai J."/>
            <person name="Hayashizaki Y."/>
        </authorList>
    </citation>
    <scope>NUCLEOTIDE SEQUENCE [LARGE SCALE MRNA] OF 1-1104 (ISOFORMS 1/2)</scope>
    <source>
        <strain>C57BL/6J</strain>
        <tissue>Diencephalon</tissue>
        <tissue>Spinal cord</tissue>
        <tissue>Spinal ganglion</tissue>
    </source>
</reference>
<reference key="3">
    <citation type="journal article" date="2002" name="DNA Res.">
        <title>Prediction of the coding sequences of mouse homologues of KIAA gene: I. The complete nucleotide sequences of 100 mouse KIAA-homologous cDNAs identified by screening of terminal sequences of cDNA clones randomly sampled from size-fractionated libraries.</title>
        <authorList>
            <person name="Okazaki N."/>
            <person name="Kikuno R."/>
            <person name="Ohara R."/>
            <person name="Inamoto S."/>
            <person name="Hara Y."/>
            <person name="Nagase T."/>
            <person name="Ohara O."/>
            <person name="Koga H."/>
        </authorList>
    </citation>
    <scope>NUCLEOTIDE SEQUENCE [LARGE SCALE MRNA] OF 980-2885 (ISOFORM 2)</scope>
    <source>
        <tissue>Pancreatic islet</tissue>
    </source>
</reference>
<reference key="4">
    <citation type="submission" date="2004-06" db="EMBL/GenBank/DDBJ databases">
        <authorList>
            <person name="Okazaki N."/>
            <person name="Kikuno R."/>
            <person name="Nagase T."/>
            <person name="Ohara O."/>
            <person name="Koga H."/>
        </authorList>
    </citation>
    <scope>SEQUENCE REVISION</scope>
</reference>
<reference key="5">
    <citation type="journal article" date="2004" name="Genome Res.">
        <title>The status, quality, and expansion of the NIH full-length cDNA project: the Mammalian Gene Collection (MGC).</title>
        <authorList>
            <consortium name="The MGC Project Team"/>
        </authorList>
    </citation>
    <scope>NUCLEOTIDE SEQUENCE [LARGE SCALE MRNA] OF 2207-2885 (ISOFORM 1)</scope>
    <source>
        <strain>C3H/He</strain>
        <tissue>Mesenchymal stem cell</tissue>
    </source>
</reference>
<reference key="6">
    <citation type="journal article" date="2006" name="J. Cell. Physiol.">
        <title>In vivo association of CReMM/CHD9 with promoters in osteogenic cells.</title>
        <authorList>
            <person name="Shur I."/>
            <person name="Socher R."/>
            <person name="Benayahu D."/>
        </authorList>
    </citation>
    <scope>TISSUE SPECIFICITY</scope>
    <scope>DEVELOPMENTAL STAGE</scope>
</reference>
<dbReference type="EC" id="3.6.4.-" evidence="2"/>
<dbReference type="EMBL" id="DQ127229">
    <property type="protein sequence ID" value="AAZ73184.2"/>
    <property type="molecule type" value="mRNA"/>
</dbReference>
<dbReference type="EMBL" id="AK034446">
    <property type="protein sequence ID" value="BAC28711.1"/>
    <property type="molecule type" value="mRNA"/>
</dbReference>
<dbReference type="EMBL" id="AK039562">
    <property type="protein sequence ID" value="BAC30385.1"/>
    <property type="molecule type" value="mRNA"/>
</dbReference>
<dbReference type="EMBL" id="AK084000">
    <property type="protein sequence ID" value="BAC39090.1"/>
    <property type="molecule type" value="mRNA"/>
</dbReference>
<dbReference type="EMBL" id="AB093226">
    <property type="protein sequence ID" value="BAC41410.3"/>
    <property type="molecule type" value="mRNA"/>
</dbReference>
<dbReference type="EMBL" id="BC052896">
    <property type="protein sequence ID" value="AAH52896.1"/>
    <property type="status" value="ALT_INIT"/>
    <property type="molecule type" value="mRNA"/>
</dbReference>
<dbReference type="CCDS" id="CCDS22517.1">
    <molecule id="Q8BYH8-2"/>
</dbReference>
<dbReference type="CCDS" id="CCDS80912.1">
    <molecule id="Q8BYH8-1"/>
</dbReference>
<dbReference type="RefSeq" id="NP_001297459.1">
    <molecule id="Q8BYH8-1"/>
    <property type="nucleotide sequence ID" value="NM_001310530.1"/>
</dbReference>
<dbReference type="RefSeq" id="NP_796198.1">
    <molecule id="Q8BYH8-2"/>
    <property type="nucleotide sequence ID" value="NM_177224.2"/>
</dbReference>
<dbReference type="RefSeq" id="XP_006530632.1">
    <molecule id="Q8BYH8-1"/>
    <property type="nucleotide sequence ID" value="XM_006530569.4"/>
</dbReference>
<dbReference type="RefSeq" id="XP_011246574.1">
    <molecule id="Q8BYH8-1"/>
    <property type="nucleotide sequence ID" value="XM_011248272.4"/>
</dbReference>
<dbReference type="RefSeq" id="XP_011246575.1">
    <molecule id="Q8BYH8-1"/>
    <property type="nucleotide sequence ID" value="XM_011248273.4"/>
</dbReference>
<dbReference type="RefSeq" id="XP_011246576.1">
    <molecule id="Q8BYH8-1"/>
    <property type="nucleotide sequence ID" value="XM_011248274.4"/>
</dbReference>
<dbReference type="RefSeq" id="XP_011246577.1">
    <molecule id="Q8BYH8-1"/>
    <property type="nucleotide sequence ID" value="XM_011248275.4"/>
</dbReference>
<dbReference type="RefSeq" id="XP_017168006.1">
    <molecule id="Q8BYH8-1"/>
    <property type="nucleotide sequence ID" value="XM_017312517.2"/>
</dbReference>
<dbReference type="RefSeq" id="XP_017168007.1">
    <molecule id="Q8BYH8-1"/>
    <property type="nucleotide sequence ID" value="XM_017312518.2"/>
</dbReference>
<dbReference type="RefSeq" id="XP_030099098.1">
    <molecule id="Q8BYH8-1"/>
    <property type="nucleotide sequence ID" value="XM_030243238.2"/>
</dbReference>
<dbReference type="SMR" id="Q8BYH8"/>
<dbReference type="BioGRID" id="224575">
    <property type="interactions" value="7"/>
</dbReference>
<dbReference type="FunCoup" id="Q8BYH8">
    <property type="interactions" value="4618"/>
</dbReference>
<dbReference type="STRING" id="10090.ENSMUSP00000105243"/>
<dbReference type="GlyGen" id="Q8BYH8">
    <property type="glycosylation" value="3 sites, 1 O-linked glycan (1 site)"/>
</dbReference>
<dbReference type="iPTMnet" id="Q8BYH8"/>
<dbReference type="PhosphoSitePlus" id="Q8BYH8"/>
<dbReference type="jPOST" id="Q8BYH8"/>
<dbReference type="PaxDb" id="10090-ENSMUSP00000105243"/>
<dbReference type="PeptideAtlas" id="Q8BYH8"/>
<dbReference type="ProteomicsDB" id="281609">
    <molecule id="Q8BYH8-1"/>
</dbReference>
<dbReference type="ProteomicsDB" id="281610">
    <molecule id="Q8BYH8-2"/>
</dbReference>
<dbReference type="Pumba" id="Q8BYH8"/>
<dbReference type="Antibodypedia" id="28339">
    <property type="antibodies" value="71 antibodies from 22 providers"/>
</dbReference>
<dbReference type="DNASU" id="109151"/>
<dbReference type="Ensembl" id="ENSMUST00000048665.8">
    <molecule id="Q8BYH8-2"/>
    <property type="protein sequence ID" value="ENSMUSP00000046356.7"/>
    <property type="gene ID" value="ENSMUSG00000056608.15"/>
</dbReference>
<dbReference type="Ensembl" id="ENSMUST00000109614.9">
    <molecule id="Q8BYH8-1"/>
    <property type="protein sequence ID" value="ENSMUSP00000105243.3"/>
    <property type="gene ID" value="ENSMUSG00000056608.15"/>
</dbReference>
<dbReference type="Ensembl" id="ENSMUST00000209423.2">
    <molecule id="Q8BYH8-1"/>
    <property type="protein sequence ID" value="ENSMUSP00000148088.2"/>
    <property type="gene ID" value="ENSMUSG00000056608.15"/>
</dbReference>
<dbReference type="GeneID" id="109151"/>
<dbReference type="KEGG" id="mmu:109151"/>
<dbReference type="UCSC" id="uc009msf.2">
    <molecule id="Q8BYH8-2"/>
    <property type="organism name" value="mouse"/>
</dbReference>
<dbReference type="UCSC" id="uc009msi.2">
    <molecule id="Q8BYH8-1"/>
    <property type="organism name" value="mouse"/>
</dbReference>
<dbReference type="AGR" id="MGI:1924001"/>
<dbReference type="CTD" id="80205"/>
<dbReference type="MGI" id="MGI:1924001">
    <property type="gene designation" value="Chd9"/>
</dbReference>
<dbReference type="VEuPathDB" id="HostDB:ENSMUSG00000056608"/>
<dbReference type="eggNOG" id="KOG0384">
    <property type="taxonomic scope" value="Eukaryota"/>
</dbReference>
<dbReference type="GeneTree" id="ENSGT00940000155706"/>
<dbReference type="HOGENOM" id="CLU_000315_5_1_1"/>
<dbReference type="InParanoid" id="Q8BYH8"/>
<dbReference type="OMA" id="HIIRGAY"/>
<dbReference type="OrthoDB" id="5857104at2759"/>
<dbReference type="PhylomeDB" id="Q8BYH8"/>
<dbReference type="TreeFam" id="TF313572"/>
<dbReference type="Reactome" id="R-MMU-400206">
    <property type="pathway name" value="Regulation of lipid metabolism by PPARalpha"/>
</dbReference>
<dbReference type="Reactome" id="R-MMU-9707564">
    <property type="pathway name" value="Cytoprotection by HMOX1"/>
</dbReference>
<dbReference type="BioGRID-ORCS" id="109151">
    <property type="hits" value="2 hits in 82 CRISPR screens"/>
</dbReference>
<dbReference type="ChiTaRS" id="Chd9">
    <property type="organism name" value="mouse"/>
</dbReference>
<dbReference type="PRO" id="PR:Q8BYH8"/>
<dbReference type="Proteomes" id="UP000000589">
    <property type="component" value="Chromosome 8"/>
</dbReference>
<dbReference type="RNAct" id="Q8BYH8">
    <property type="molecule type" value="protein"/>
</dbReference>
<dbReference type="Bgee" id="ENSMUSG00000056608">
    <property type="expression patterns" value="Expressed in right kidney and 224 other cell types or tissues"/>
</dbReference>
<dbReference type="ExpressionAtlas" id="Q8BYH8">
    <property type="expression patterns" value="baseline and differential"/>
</dbReference>
<dbReference type="GO" id="GO:0005829">
    <property type="term" value="C:cytosol"/>
    <property type="evidence" value="ECO:0007669"/>
    <property type="project" value="Ensembl"/>
</dbReference>
<dbReference type="GO" id="GO:0005654">
    <property type="term" value="C:nucleoplasm"/>
    <property type="evidence" value="ECO:0007669"/>
    <property type="project" value="Ensembl"/>
</dbReference>
<dbReference type="GO" id="GO:0005524">
    <property type="term" value="F:ATP binding"/>
    <property type="evidence" value="ECO:0007669"/>
    <property type="project" value="UniProtKB-KW"/>
</dbReference>
<dbReference type="GO" id="GO:0016887">
    <property type="term" value="F:ATP hydrolysis activity"/>
    <property type="evidence" value="ECO:0007669"/>
    <property type="project" value="RHEA"/>
</dbReference>
<dbReference type="GO" id="GO:0003677">
    <property type="term" value="F:DNA binding"/>
    <property type="evidence" value="ECO:0007669"/>
    <property type="project" value="UniProtKB-KW"/>
</dbReference>
<dbReference type="GO" id="GO:0004386">
    <property type="term" value="F:helicase activity"/>
    <property type="evidence" value="ECO:0007669"/>
    <property type="project" value="UniProtKB-KW"/>
</dbReference>
<dbReference type="GO" id="GO:0006325">
    <property type="term" value="P:chromatin organization"/>
    <property type="evidence" value="ECO:0007669"/>
    <property type="project" value="UniProtKB-KW"/>
</dbReference>
<dbReference type="CDD" id="cd18668">
    <property type="entry name" value="CD1_tandem_CHD5-9_like"/>
    <property type="match status" value="1"/>
</dbReference>
<dbReference type="CDD" id="cd18663">
    <property type="entry name" value="CD2_tandem_CHD5-9_like"/>
    <property type="match status" value="1"/>
</dbReference>
<dbReference type="CDD" id="cd18061">
    <property type="entry name" value="DEXHc_CHD9"/>
    <property type="match status" value="1"/>
</dbReference>
<dbReference type="CDD" id="cd18793">
    <property type="entry name" value="SF2_C_SNF"/>
    <property type="match status" value="1"/>
</dbReference>
<dbReference type="FunFam" id="2.40.50.40:FF:000001">
    <property type="entry name" value="chromodomain-helicase-DNA-binding protein 8 isoform X4"/>
    <property type="match status" value="1"/>
</dbReference>
<dbReference type="FunFam" id="3.40.50.10810:FF:000003">
    <property type="entry name" value="chromodomain-helicase-DNA-binding protein 8 isoform X4"/>
    <property type="match status" value="1"/>
</dbReference>
<dbReference type="FunFam" id="3.40.5.120:FF:000002">
    <property type="entry name" value="chromodomain-helicase-DNA-binding protein 9 isoform X1"/>
    <property type="match status" value="1"/>
</dbReference>
<dbReference type="FunFam" id="3.40.5.120:FF:000003">
    <property type="entry name" value="chromodomain-helicase-DNA-binding protein 9 isoform X1"/>
    <property type="match status" value="1"/>
</dbReference>
<dbReference type="FunFam" id="3.40.50.300:FF:000015">
    <property type="entry name" value="chromodomain-helicase-DNA-binding protein 9 isoform X1"/>
    <property type="match status" value="1"/>
</dbReference>
<dbReference type="Gene3D" id="2.40.50.40">
    <property type="match status" value="2"/>
</dbReference>
<dbReference type="Gene3D" id="3.40.5.120">
    <property type="match status" value="2"/>
</dbReference>
<dbReference type="Gene3D" id="1.10.10.60">
    <property type="entry name" value="Homeodomain-like"/>
    <property type="match status" value="2"/>
</dbReference>
<dbReference type="Gene3D" id="3.40.50.300">
    <property type="entry name" value="P-loop containing nucleotide triphosphate hydrolases"/>
    <property type="match status" value="1"/>
</dbReference>
<dbReference type="Gene3D" id="3.40.50.10810">
    <property type="entry name" value="Tandem AAA-ATPase domain"/>
    <property type="match status" value="1"/>
</dbReference>
<dbReference type="InterPro" id="IPR006576">
    <property type="entry name" value="BRK_domain"/>
</dbReference>
<dbReference type="InterPro" id="IPR037259">
    <property type="entry name" value="BRK_sf"/>
</dbReference>
<dbReference type="InterPro" id="IPR051493">
    <property type="entry name" value="CHD"/>
</dbReference>
<dbReference type="InterPro" id="IPR016197">
    <property type="entry name" value="Chromo-like_dom_sf"/>
</dbReference>
<dbReference type="InterPro" id="IPR000953">
    <property type="entry name" value="Chromo/chromo_shadow_dom"/>
</dbReference>
<dbReference type="InterPro" id="IPR023780">
    <property type="entry name" value="Chromo_domain"/>
</dbReference>
<dbReference type="InterPro" id="IPR014001">
    <property type="entry name" value="Helicase_ATP-bd"/>
</dbReference>
<dbReference type="InterPro" id="IPR001650">
    <property type="entry name" value="Helicase_C-like"/>
</dbReference>
<dbReference type="InterPro" id="IPR056342">
    <property type="entry name" value="HTH_CHD6-9"/>
</dbReference>
<dbReference type="InterPro" id="IPR027417">
    <property type="entry name" value="P-loop_NTPase"/>
</dbReference>
<dbReference type="InterPro" id="IPR038718">
    <property type="entry name" value="SNF2-like_sf"/>
</dbReference>
<dbReference type="InterPro" id="IPR049730">
    <property type="entry name" value="SNF2/RAD54-like_C"/>
</dbReference>
<dbReference type="InterPro" id="IPR000330">
    <property type="entry name" value="SNF2_N"/>
</dbReference>
<dbReference type="PANTHER" id="PTHR46850">
    <property type="entry name" value="CHROMODOMAIN-HELICASE-DNA-BINDING PROTEIN 9"/>
    <property type="match status" value="1"/>
</dbReference>
<dbReference type="PANTHER" id="PTHR46850:SF1">
    <property type="entry name" value="CHROMODOMAIN-HELICASE-DNA-BINDING PROTEIN 9"/>
    <property type="match status" value="1"/>
</dbReference>
<dbReference type="Pfam" id="PF07533">
    <property type="entry name" value="BRK"/>
    <property type="match status" value="2"/>
</dbReference>
<dbReference type="Pfam" id="PF00385">
    <property type="entry name" value="Chromo"/>
    <property type="match status" value="2"/>
</dbReference>
<dbReference type="Pfam" id="PF00271">
    <property type="entry name" value="Helicase_C"/>
    <property type="match status" value="1"/>
</dbReference>
<dbReference type="Pfam" id="PF23078">
    <property type="entry name" value="HTH_CHD6-9"/>
    <property type="match status" value="1"/>
</dbReference>
<dbReference type="Pfam" id="PF00176">
    <property type="entry name" value="SNF2-rel_dom"/>
    <property type="match status" value="1"/>
</dbReference>
<dbReference type="SMART" id="SM00592">
    <property type="entry name" value="BRK"/>
    <property type="match status" value="2"/>
</dbReference>
<dbReference type="SMART" id="SM00298">
    <property type="entry name" value="CHROMO"/>
    <property type="match status" value="2"/>
</dbReference>
<dbReference type="SMART" id="SM00487">
    <property type="entry name" value="DEXDc"/>
    <property type="match status" value="1"/>
</dbReference>
<dbReference type="SMART" id="SM00490">
    <property type="entry name" value="HELICc"/>
    <property type="match status" value="1"/>
</dbReference>
<dbReference type="SUPFAM" id="SSF160481">
    <property type="entry name" value="BRK domain-like"/>
    <property type="match status" value="2"/>
</dbReference>
<dbReference type="SUPFAM" id="SSF54160">
    <property type="entry name" value="Chromo domain-like"/>
    <property type="match status" value="2"/>
</dbReference>
<dbReference type="SUPFAM" id="SSF52540">
    <property type="entry name" value="P-loop containing nucleoside triphosphate hydrolases"/>
    <property type="match status" value="2"/>
</dbReference>
<dbReference type="PROSITE" id="PS50013">
    <property type="entry name" value="CHROMO_2"/>
    <property type="match status" value="1"/>
</dbReference>
<dbReference type="PROSITE" id="PS51192">
    <property type="entry name" value="HELICASE_ATP_BIND_1"/>
    <property type="match status" value="1"/>
</dbReference>
<dbReference type="PROSITE" id="PS51194">
    <property type="entry name" value="HELICASE_CTER"/>
    <property type="match status" value="1"/>
</dbReference>
<name>CHD9_MOUSE</name>
<protein>
    <recommendedName>
        <fullName>Chromodomain-helicase-DNA-binding protein 9</fullName>
        <shortName>CHD-9</shortName>
        <ecNumber evidence="2">3.6.4.-</ecNumber>
    </recommendedName>
    <alternativeName>
        <fullName>ATP-dependent helicase CHD9</fullName>
    </alternativeName>
    <alternativeName>
        <fullName>PPAR-alpha-interacting complex protein 320 kDa</fullName>
    </alternativeName>
    <alternativeName>
        <fullName>Peroxisomal proliferator-activated receptor A-interacting complex 320 kDa protein</fullName>
    </alternativeName>
</protein>
<sequence length="2885" mass="323860">MTDPMMDFFDDANLFGETLEGLSDDTFVQPGPVSLVDELNLGAEFEPLHIDSLNHVQGTPTHQKMADFEQLSQFDSMKFHPVNQSFGSPVEHVLSPHSQFNCSPIHPPNQPNGLFQDVADGSPMWGHQTATGLANQNGSPFHQPGHSHSLHQNKSFVAHPDFALFQASEHQTQCSSLHSQQSRSNLNPGQNSLGQAKNFLDANVSGAHRVNVNHLATAPSSQQTLPVQFSPTANPPAHFLKCSSHQEGNYNRPSPSMTSCSVSNSQQFPSHYSFSSGHVSPSSLLQSSAGLAPGHTNQALSDFAGSNSFSPHRGMKQEPTQHLLNPTPSLNSNNFQILHSSHPQGNYSNSKLSPVHMNFPDPVDAGPPVGHFNDHAETNGFSSLEENLLHHVDSHAEPFAGLDPEDLLQEGLLPQFDESPFGQDNSNHVLDHDLDRQFTSHLVSRPSDMAQTQLQYQARGWPSPLSTNHQHLHSRNHLCLQRQPPSSKKSDGSGTYTKLQNTQVRVMSEKKPRKRVESESKQEKANRIISEAIARAKERGERNIPRVMSPENFPSASVEGKEEKRGRRMKSKPKDRDNKKPKTYSKLKEKTKIGKLIITLGKKHKRRNESSDELSDAEQRSQHTFKEQHSQKRRSNRQIKRKKYAEDAEGKQSEEEVKGSLRVKRNSAPPPGEQPLQLFVENPSEEDAAIVDKILACRTVKKEVSPGVMLDIEEFFVKYKNYSYLHCEWATEQQLLKDKRIQQKIKRFKLRQAQRAHFLADMEEEPFNPDYVEVDRILEVSFCEDKDTGESVIYYLVKWCSLPYEDSTWELKEDVDLAKIEEFEQLQASRPDTRHLDRPPSNIWKKIEQSREYKNGNQLREYQLEGLNWLLFNWYNRRNCILADEMGLGKTIQSITFLYEILLTGIRGPFLIIAPLSTIANWEREFRTWTDINVVVYHGSLISRQMIQQYEMYFRDSQGRIIRGAYRFQAIITTFEMILGGCGELNAIDWRCVIIDEAHRLKNKNCKLLEGLKLMNLEHKVLLTGTPLQNTVEELFSLLHFLEPLRFPSESTFMQEFGDLKTEEQVQKLQAILKPMMLRRLKEDVEKKLAPKEETIIEVELTNIQKKYYRAILEKNFSFLSKGAGQTNVPNLVNTMMELRKCCNHPYLIKGAEEKILGEFRDTYNPSASDFHLQAMIQSAGKLVLIDKLLPKMKAGGHKVLIFSQMVRCLDILEDYLIHKRYLYERIDGRVRGNLRQAAIDRFSKPDSDRFVFLLCTRAGGLGINLTAADTCIIFDSDWNPQNDLQAQARCHRIGQNKAVKVYRLVTRNSYEREMFDRASLKLGLDKAVLQSMSGRDSNVSGIQQLSKKEIEDLLRRGAYGAIMEEEDEGSKFCEEDIDQILLRRTKTITIESEGRGSTFAKASFVASGNRTDISLDDPNFWQKWAKKAELDIDTISGRNSLVIDTPRIRKQTRPFSATKDELAELSEAESEGEEKPKLRRPCDRSGGYGRTECFRVEKNLLVYGWGRWREILSHGRFKRQLNEHDVEVICRALLAYCLIHYRGDEKIKGFIWDLITPTEDGQTRELQNHLGLSAPVPRGRKGKKVKTQTSSFDIQKAEWLRKYNPEQLLQDEGYKKHVKHHCNKVLLRVRMLYYLKQEVIGNESQKVFDGVDASDIDVWVPEPDHSEVPAAWWDFDADKSLLIGVFKHGYEKYNTIRADPALCFLERVGKPDDKAVAAEQRANDYMDGDVEDPEYKPAPAIFKDDIEDDVSSPGDLVIADGEGQLMEGDKVYWPTPSALTTRLRRLITAYQRTNKNRHIQQMQPTFSLPANAMQPLYEEATLNPKMAAKIERQQRWTRREEADFYRVVSTFGVVFDPDRGQFDWTKFRALARLHKKTDNSLEKYLCAFMSMCRRVCRLPSKEELVDPNIFIQPITEERASRTLYRIELLRKVREQALRHPQLFERLKLCHPNPDLPIWWECGSHDRDLLIGAAKHGVSRTDYHILRDPELSFMAAQRNYNQSKAAHSRTSAPLLQQYQVALSASPLTSLPRLLGAKGTLLEDMKVKSESLTEEPQSSEEESMSSMETRTRVKSEPVSPKNGVLSQATGDQKSGGKSETDRRMVAARTEPLTPNPASKKPRVHKRGSQSSSDSDSDSARSSCSSRSSSSSSSSSSCSHSRSGSSSSSSSSCSSASSSSSSSSSSSSSSSSSSSEESDSEEDVQKREGTPHRKAYDEESVASLSTTQDETQDSFQANNGTPESAYLLQGGYMLAASYWPKDRVMINRLDSICQTVLKGKWPSARRHYDANTVASFYTTKLLDSPGAATERGEPSVPTPPAVAVREEHEQSAQMSKVKKHVREKEFTVKIKDEGGLKLTFQKQGLAQKRPFDGEDGALGQQQYLTRLRELQSTSETSLVNLPKAVPASGTSIQPTLGANGAILDSQPIVKKRRGRRRNVEGADILFLNRNKPPNHIPTGMNPALSYPQPQRIPDTESPVPVINLKDGTRLAGDDAPKRKDLDRWLKEHPGYVEDLGAFIPRVQLHEGRPKQKRHRCRNPNKLDINSLTGEERVQLINRRNARKVGGAFAPPLKDLCRFLKENSEYGVAPEWGDVVKQSGFLPESMFERILTGPVVREEVSRRGRRPKSGIAKATTAAAVPAGSVPGNPLLANGLLPGVDLTALQALQQNLQNLQSLQVTAGLMGMPAGLSSGGETKNMAAMFPMLFSGMAGLPNLLGMGGLLSKTAESGAEEKRGNDSKELEGKKERTESQSPENGGERCVPGSPSTSSTAALSSAAAAKPIALNPLLLSNILYPGMLLTPGLNLHLPTLSQSNAFDVQKNKSDDLDSSKSVEIKEENSRVRDQEEKGGTEPSPLNENSTDEGSERASSGSDSSSSSSEDSDSSNED</sequence>
<proteinExistence type="evidence at protein level"/>
<organism>
    <name type="scientific">Mus musculus</name>
    <name type="common">Mouse</name>
    <dbReference type="NCBI Taxonomy" id="10090"/>
    <lineage>
        <taxon>Eukaryota</taxon>
        <taxon>Metazoa</taxon>
        <taxon>Chordata</taxon>
        <taxon>Craniata</taxon>
        <taxon>Vertebrata</taxon>
        <taxon>Euteleostomi</taxon>
        <taxon>Mammalia</taxon>
        <taxon>Eutheria</taxon>
        <taxon>Euarchontoglires</taxon>
        <taxon>Glires</taxon>
        <taxon>Rodentia</taxon>
        <taxon>Myomorpha</taxon>
        <taxon>Muroidea</taxon>
        <taxon>Muridae</taxon>
        <taxon>Murinae</taxon>
        <taxon>Mus</taxon>
        <taxon>Mus</taxon>
    </lineage>
</organism>
<gene>
    <name type="primary">Chd9</name>
    <name type="synonym">Kiaa0308</name>
    <name type="synonym">Pric320</name>
</gene>
<comment type="function">
    <text evidence="1">Probable ATP-dependent chromatin-remodeling factor. Acts as a transcriptional coactivator for PPARA and possibly other nuclear receptors. Has DNA-dependent ATPase activity and binds to A/T-rich DNA (By similarity). Associates with A/T-rich regulatory regions in promoters of genes that participate in the differentiation of progenitors during osteogenesis.</text>
</comment>
<comment type="catalytic activity">
    <reaction evidence="2">
        <text>ATP + H2O = ADP + phosphate + H(+)</text>
        <dbReference type="Rhea" id="RHEA:13065"/>
        <dbReference type="ChEBI" id="CHEBI:15377"/>
        <dbReference type="ChEBI" id="CHEBI:15378"/>
        <dbReference type="ChEBI" id="CHEBI:30616"/>
        <dbReference type="ChEBI" id="CHEBI:43474"/>
        <dbReference type="ChEBI" id="CHEBI:456216"/>
    </reaction>
</comment>
<comment type="subunit">
    <text evidence="1">Interacts with PPARA. Probably interacts with ESR1 and NR1I3 (By similarity).</text>
</comment>
<comment type="subcellular location">
    <subcellularLocation>
        <location evidence="1">Cytoplasm</location>
    </subcellularLocation>
    <subcellularLocation>
        <location evidence="1">Nucleus</location>
    </subcellularLocation>
</comment>
<comment type="alternative products">
    <event type="alternative splicing"/>
    <isoform>
        <id>Q8BYH8-1</id>
        <name>1</name>
        <sequence type="displayed"/>
    </isoform>
    <isoform>
        <id>Q8BYH8-2</id>
        <name>2</name>
        <sequence type="described" ref="VSP_018087"/>
    </isoform>
</comment>
<comment type="tissue specificity">
    <text evidence="7">Expressed in osteoprogenitor cells during development and in mature bone (at protein level).</text>
</comment>
<comment type="developmental stage">
    <text evidence="7">Expressed from embryonic day 16.5 dpc in mesenchymal cartilage surrounding bone cartilage and newly formed bone trabecular spicules. Detected in bone sections of 4-day-old newborn and 3-week-old mice.</text>
</comment>
<comment type="PTM">
    <text evidence="1">Phosphorylated on serine and tyrosine residues.</text>
</comment>
<comment type="similarity">
    <text evidence="10">Belongs to the SNF2/RAD54 helicase family.</text>
</comment>
<comment type="sequence caution" evidence="10">
    <conflict type="erroneous initiation">
        <sequence resource="EMBL-CDS" id="AAH52896"/>
    </conflict>
</comment>
<feature type="chain" id="PRO_0000233173" description="Chromodomain-helicase-DNA-binding protein 9">
    <location>
        <begin position="1"/>
        <end position="2885"/>
    </location>
</feature>
<feature type="domain" description="Chromo 1" evidence="3">
    <location>
        <begin position="689"/>
        <end position="760"/>
    </location>
</feature>
<feature type="domain" description="Chromo 2" evidence="3">
    <location>
        <begin position="772"/>
        <end position="838"/>
    </location>
</feature>
<feature type="domain" description="Helicase ATP-binding" evidence="4">
    <location>
        <begin position="871"/>
        <end position="1045"/>
    </location>
</feature>
<feature type="domain" description="Helicase C-terminal" evidence="5">
    <location>
        <begin position="1185"/>
        <end position="1336"/>
    </location>
</feature>
<feature type="region of interest" description="Disordered" evidence="6">
    <location>
        <begin position="173"/>
        <end position="195"/>
    </location>
</feature>
<feature type="region of interest" description="Disordered" evidence="6">
    <location>
        <begin position="242"/>
        <end position="263"/>
    </location>
</feature>
<feature type="region of interest" description="Disordered" evidence="6">
    <location>
        <begin position="283"/>
        <end position="347"/>
    </location>
</feature>
<feature type="region of interest" description="Disordered" evidence="6">
    <location>
        <begin position="479"/>
        <end position="677"/>
    </location>
</feature>
<feature type="region of interest" description="Disordered" evidence="6">
    <location>
        <begin position="1460"/>
        <end position="1484"/>
    </location>
</feature>
<feature type="region of interest" description="Disordered" evidence="6">
    <location>
        <begin position="2046"/>
        <end position="2238"/>
    </location>
</feature>
<feature type="region of interest" description="Binds A/T-rich DNA" evidence="1">
    <location>
        <begin position="2331"/>
        <end position="2471"/>
    </location>
</feature>
<feature type="region of interest" description="A.T hook-like">
    <location>
        <begin position="2428"/>
        <end position="2435"/>
    </location>
</feature>
<feature type="region of interest" description="Disordered" evidence="6">
    <location>
        <begin position="2473"/>
        <end position="2494"/>
    </location>
</feature>
<feature type="region of interest" description="Disordered" evidence="6">
    <location>
        <begin position="2724"/>
        <end position="2770"/>
    </location>
</feature>
<feature type="region of interest" description="Disordered" evidence="6">
    <location>
        <begin position="2818"/>
        <end position="2885"/>
    </location>
</feature>
<feature type="short sequence motif" description="LXXLL motif 1">
    <location>
        <begin position="867"/>
        <end position="871"/>
    </location>
</feature>
<feature type="short sequence motif" description="DEAH box">
    <location>
        <begin position="996"/>
        <end position="999"/>
    </location>
</feature>
<feature type="short sequence motif" description="LXXLL motif 2">
    <location>
        <begin position="1035"/>
        <end position="1039"/>
    </location>
</feature>
<feature type="short sequence motif" description="LXXLL motif 3">
    <location>
        <begin position="2030"/>
        <end position="2034"/>
    </location>
</feature>
<feature type="short sequence motif" description="LXXLL motif 4">
    <location>
        <begin position="2710"/>
        <end position="2714"/>
    </location>
</feature>
<feature type="short sequence motif" description="LXXLL motif 5">
    <location>
        <begin position="2782"/>
        <end position="2786"/>
    </location>
</feature>
<feature type="compositionally biased region" description="Polar residues" evidence="6">
    <location>
        <begin position="243"/>
        <end position="263"/>
    </location>
</feature>
<feature type="compositionally biased region" description="Polar residues" evidence="6">
    <location>
        <begin position="283"/>
        <end position="310"/>
    </location>
</feature>
<feature type="compositionally biased region" description="Low complexity" evidence="6">
    <location>
        <begin position="323"/>
        <end position="334"/>
    </location>
</feature>
<feature type="compositionally biased region" description="Polar residues" evidence="6">
    <location>
        <begin position="335"/>
        <end position="347"/>
    </location>
</feature>
<feature type="compositionally biased region" description="Polar residues" evidence="6">
    <location>
        <begin position="483"/>
        <end position="505"/>
    </location>
</feature>
<feature type="compositionally biased region" description="Basic and acidic residues" evidence="6">
    <location>
        <begin position="507"/>
        <end position="526"/>
    </location>
</feature>
<feature type="compositionally biased region" description="Basic and acidic residues" evidence="6">
    <location>
        <begin position="534"/>
        <end position="544"/>
    </location>
</feature>
<feature type="compositionally biased region" description="Basic and acidic residues" evidence="6">
    <location>
        <begin position="572"/>
        <end position="592"/>
    </location>
</feature>
<feature type="compositionally biased region" description="Basic and acidic residues" evidence="6">
    <location>
        <begin position="617"/>
        <end position="630"/>
    </location>
</feature>
<feature type="compositionally biased region" description="Basic residues" evidence="6">
    <location>
        <begin position="631"/>
        <end position="643"/>
    </location>
</feature>
<feature type="compositionally biased region" description="Basic and acidic residues" evidence="6">
    <location>
        <begin position="644"/>
        <end position="659"/>
    </location>
</feature>
<feature type="compositionally biased region" description="Acidic residues" evidence="6">
    <location>
        <begin position="1464"/>
        <end position="1473"/>
    </location>
</feature>
<feature type="compositionally biased region" description="Basic and acidic residues" evidence="6">
    <location>
        <begin position="1474"/>
        <end position="1484"/>
    </location>
</feature>
<feature type="compositionally biased region" description="Polar residues" evidence="6">
    <location>
        <begin position="2083"/>
        <end position="2092"/>
    </location>
</feature>
<feature type="compositionally biased region" description="Basic and acidic residues" evidence="6">
    <location>
        <begin position="2093"/>
        <end position="2103"/>
    </location>
</feature>
<feature type="compositionally biased region" description="Low complexity" evidence="6">
    <location>
        <begin position="2127"/>
        <end position="2193"/>
    </location>
</feature>
<feature type="compositionally biased region" description="Basic and acidic residues" evidence="6">
    <location>
        <begin position="2201"/>
        <end position="2215"/>
    </location>
</feature>
<feature type="compositionally biased region" description="Polar residues" evidence="6">
    <location>
        <begin position="2220"/>
        <end position="2238"/>
    </location>
</feature>
<feature type="compositionally biased region" description="Basic and acidic residues" evidence="6">
    <location>
        <begin position="2484"/>
        <end position="2494"/>
    </location>
</feature>
<feature type="compositionally biased region" description="Basic and acidic residues" evidence="6">
    <location>
        <begin position="2728"/>
        <end position="2747"/>
    </location>
</feature>
<feature type="compositionally biased region" description="Basic and acidic residues" evidence="6">
    <location>
        <begin position="2818"/>
        <end position="2847"/>
    </location>
</feature>
<feature type="compositionally biased region" description="Low complexity" evidence="6">
    <location>
        <begin position="2864"/>
        <end position="2876"/>
    </location>
</feature>
<feature type="binding site" evidence="4">
    <location>
        <begin position="884"/>
        <end position="891"/>
    </location>
    <ligand>
        <name>ATP</name>
        <dbReference type="ChEBI" id="CHEBI:30616"/>
    </ligand>
</feature>
<feature type="modified residue" description="N6-acetyllysine" evidence="2">
    <location>
        <position position="498"/>
    </location>
</feature>
<feature type="modified residue" description="Phosphoserine" evidence="2">
    <location>
        <position position="549"/>
    </location>
</feature>
<feature type="modified residue" description="Phosphoserine" evidence="2">
    <location>
        <position position="610"/>
    </location>
</feature>
<feature type="modified residue" description="Phosphoserine" evidence="2">
    <location>
        <position position="1467"/>
    </location>
</feature>
<feature type="modified residue" description="Phosphoserine" evidence="2">
    <location>
        <position position="1471"/>
    </location>
</feature>
<feature type="modified residue" description="Phosphoserine" evidence="2">
    <location>
        <position position="2025"/>
    </location>
</feature>
<feature type="modified residue" description="Phosphoserine" evidence="2">
    <location>
        <position position="2057"/>
    </location>
</feature>
<feature type="modified residue" description="Phosphoserine" evidence="2">
    <location>
        <position position="2058"/>
    </location>
</feature>
<feature type="modified residue" description="Phosphoserine" evidence="2">
    <location>
        <position position="2074"/>
    </location>
</feature>
<feature type="modified residue" description="Phosphoserine" evidence="2">
    <location>
        <position position="2078"/>
    </location>
</feature>
<feature type="cross-link" description="Glycyl lysine isopeptide (Lys-Gly) (interchain with G-Cter in SUMO2)" evidence="2">
    <location>
        <position position="197"/>
    </location>
</feature>
<feature type="cross-link" description="Glycyl lysine isopeptide (Lys-Gly) (interchain with G-Cter in SUMO2)" evidence="2">
    <location>
        <position position="595"/>
    </location>
</feature>
<feature type="cross-link" description="Glycyl lysine isopeptide (Lys-Gly) (interchain with G-Cter in SUMO2)" evidence="2">
    <location>
        <position position="1587"/>
    </location>
</feature>
<feature type="cross-link" description="Glycyl lysine isopeptide (Lys-Gly) (interchain with G-Cter in SUMO2)" evidence="2">
    <location>
        <position position="1737"/>
    </location>
</feature>
<feature type="cross-link" description="Glycyl lysine isopeptide (Lys-Gly) (interchain with G-Cter in SUMO2)" evidence="2">
    <location>
        <position position="1902"/>
    </location>
</feature>
<feature type="cross-link" description="Glycyl lysine isopeptide (Lys-Gly) (interchain with G-Cter in SUMO2)" evidence="2">
    <location>
        <position position="2037"/>
    </location>
</feature>
<feature type="cross-link" description="Glycyl lysine isopeptide (Lys-Gly) (interchain with G-Cter in SUMO2)" evidence="2">
    <location>
        <position position="2073"/>
    </location>
</feature>
<feature type="cross-link" description="Glycyl lysine isopeptide (Lys-Gly) (interchain with G-Cter in SUMO2)" evidence="2">
    <location>
        <position position="2349"/>
    </location>
</feature>
<feature type="cross-link" description="Glycyl lysine isopeptide (Lys-Gly) (interchain with G-Cter in SUMO2)" evidence="2">
    <location>
        <position position="2355"/>
    </location>
</feature>
<feature type="cross-link" description="Glycyl lysine isopeptide (Lys-Gly) (interchain with G-Cter in SUMO2)" evidence="2">
    <location>
        <position position="2360"/>
    </location>
</feature>
<feature type="cross-link" description="Glycyl lysine isopeptide (Lys-Gly) (interchain with G-Cter in SUMO2)" evidence="2">
    <location>
        <position position="2833"/>
    </location>
</feature>
<feature type="splice variant" id="VSP_018087" description="In isoform 2." evidence="8 9">
    <location>
        <begin position="2335"/>
        <end position="2350"/>
    </location>
</feature>
<feature type="sequence conflict" description="In Ref. 2; BAC39090." evidence="10" ref="2">
    <original>N</original>
    <variation>I</variation>
    <location>
        <position position="101"/>
    </location>
</feature>
<feature type="sequence conflict" description="In Ref. 2; BAC28711." evidence="10" ref="2">
    <original>Y</original>
    <variation>D</variation>
    <location>
        <position position="584"/>
    </location>
</feature>